<name>TAG2N_AGEOR</name>
<feature type="signal peptide" evidence="2">
    <location>
        <begin position="1"/>
        <end position="20"/>
    </location>
</feature>
<feature type="propeptide" id="PRO_5000093627" evidence="2">
    <location>
        <begin position="21"/>
        <end position="34"/>
    </location>
</feature>
<feature type="chain" id="PRO_5000093628" description="U2-agatoxin-Ao1n">
    <location>
        <begin position="35"/>
        <end position="69"/>
    </location>
</feature>
<feature type="modified residue" description="Leucine amide" evidence="1">
    <location>
        <position position="69"/>
    </location>
</feature>
<feature type="disulfide bond" evidence="1">
    <location>
        <begin position="37"/>
        <end position="53"/>
    </location>
</feature>
<feature type="disulfide bond" evidence="1">
    <location>
        <begin position="44"/>
        <end position="58"/>
    </location>
</feature>
<feature type="disulfide bond" evidence="1">
    <location>
        <begin position="52"/>
        <end position="68"/>
    </location>
</feature>
<keyword id="KW-0027">Amidation</keyword>
<keyword id="KW-1015">Disulfide bond</keyword>
<keyword id="KW-0960">Knottin</keyword>
<keyword id="KW-0528">Neurotoxin</keyword>
<keyword id="KW-0964">Secreted</keyword>
<keyword id="KW-0732">Signal</keyword>
<keyword id="KW-0800">Toxin</keyword>
<reference key="1">
    <citation type="journal article" date="2005" name="Proteins">
        <title>A novel strategy for the identification of toxinlike structures in spider venom.</title>
        <authorList>
            <person name="Kozlov S.A."/>
            <person name="Malyavka A."/>
            <person name="McCutchen B."/>
            <person name="Lu A."/>
            <person name="Schepers E."/>
            <person name="Herrmann R."/>
            <person name="Grishin E.V."/>
        </authorList>
    </citation>
    <scope>NUCLEOTIDE SEQUENCE [MRNA]</scope>
    <source>
        <tissue>Venom gland</tissue>
    </source>
</reference>
<accession>Q5Y4X2</accession>
<evidence type="ECO:0000250" key="1"/>
<evidence type="ECO:0000255" key="2"/>
<evidence type="ECO:0000305" key="3"/>
<proteinExistence type="evidence at transcript level"/>
<dbReference type="EMBL" id="AY681310">
    <property type="protein sequence ID" value="AAU93668.1"/>
    <property type="molecule type" value="mRNA"/>
</dbReference>
<dbReference type="SMR" id="Q5Y4X2"/>
<dbReference type="ArachnoServer" id="AS000100">
    <property type="toxin name" value="U2-agatoxin-Ao1n"/>
</dbReference>
<dbReference type="GO" id="GO:0005576">
    <property type="term" value="C:extracellular region"/>
    <property type="evidence" value="ECO:0007669"/>
    <property type="project" value="UniProtKB-SubCell"/>
</dbReference>
<dbReference type="GO" id="GO:0090729">
    <property type="term" value="F:toxin activity"/>
    <property type="evidence" value="ECO:0007669"/>
    <property type="project" value="UniProtKB-KW"/>
</dbReference>
<dbReference type="Pfam" id="PF05980">
    <property type="entry name" value="Toxin_7"/>
    <property type="match status" value="1"/>
</dbReference>
<dbReference type="SUPFAM" id="SSF57059">
    <property type="entry name" value="omega toxin-like"/>
    <property type="match status" value="1"/>
</dbReference>
<organism>
    <name type="scientific">Agelena orientalis</name>
    <name type="common">Funnel-web spider</name>
    <dbReference type="NCBI Taxonomy" id="293813"/>
    <lineage>
        <taxon>Eukaryota</taxon>
        <taxon>Metazoa</taxon>
        <taxon>Ecdysozoa</taxon>
        <taxon>Arthropoda</taxon>
        <taxon>Chelicerata</taxon>
        <taxon>Arachnida</taxon>
        <taxon>Araneae</taxon>
        <taxon>Araneomorphae</taxon>
        <taxon>Entelegynae</taxon>
        <taxon>Agelenidae</taxon>
        <taxon>Agelena</taxon>
    </lineage>
</organism>
<comment type="function">
    <text evidence="1">Insect active toxin causing rapid but reversible paralysis in crickets. No activity shown in mammals. Does not show effect on mammalian voltage-gated calcium channels (By similarity).</text>
</comment>
<comment type="subcellular location">
    <subcellularLocation>
        <location evidence="1">Secreted</location>
    </subcellularLocation>
</comment>
<comment type="tissue specificity">
    <text>Expressed by the venom gland.</text>
</comment>
<comment type="domain">
    <text evidence="1">The presence of a 'disulfide through disulfide knot' structurally defines this protein as a knottin.</text>
</comment>
<comment type="similarity">
    <text evidence="3">Belongs to the neurotoxin 01 (U2-agtx) family.</text>
</comment>
<sequence>MRAIISLLLISAMVFYIIAAVPEEEGLQLSEDERGGCLPHNRFCNALSGPRCCSGLRCKELSIRDSRCLG</sequence>
<protein>
    <recommendedName>
        <fullName>U2-agatoxin-Ao1n</fullName>
        <shortName>U2-AGTX-Ao1n</shortName>
    </recommendedName>
    <alternativeName>
        <fullName>Toxin-like structure Agel_13</fullName>
    </alternativeName>
</protein>